<comment type="function">
    <text evidence="9 10">Component of the mitochondrial ribosome (mitoribosome), a dedicated translation machinery responsible for the synthesis of mitochondrial genome-encoded proteins, including at least some of the essential transmembrane subunits of the mitochondrial respiratory chain. The mitoribosomes are attached to the mitochondrial inner membrane and translation products are cotranslationally integrated into the membrane.</text>
</comment>
<comment type="subunit">
    <text evidence="2 6">Component of the mitochondrial small ribosomal subunit (mt-SSU). Mature yeast 74S mitochondrial ribosomes consist of a small (37S) and a large (54S) subunit. The 37S small subunit contains a 15S ribosomal RNA (15S mt-rRNA) and 34 different proteins. The 54S large subunit contains a 21S rRNA (21S mt-rRNA) and 46 different proteins.</text>
</comment>
<comment type="subcellular location">
    <subcellularLocation>
        <location evidence="4">Mitochondrion</location>
    </subcellularLocation>
    <text evidence="5">Mitoribosomes are tethered to the mitochondrial inner membrane and spatially aligned with the membrane insertion machinery through two distinct membrane contact sites, formed by the 21S rRNA expansion segment 96-ES1 and the inner membrane protein MBA1.</text>
</comment>
<comment type="miscellaneous">
    <text evidence="3">Present with 1210 molecules/cell in log phase SD medium.</text>
</comment>
<comment type="similarity">
    <text evidence="8">Belongs to the bacterial ribosomal protein bS18 family.</text>
</comment>
<comment type="sequence caution" evidence="8">
    <conflict type="erroneous initiation">
        <sequence resource="EMBL-CDS" id="AAB64585"/>
    </conflict>
</comment>
<sequence length="138" mass="15835">MQPIIKGAVSSTFKRALYNFGIKEKKSVNIEMGRTQQTKKIDQSLSKKLPKGTIYDPFDFSMGRIHLDRKYQANKNSNRNDIMKSGANPLEFYARPRILSRYVTSTGRIQHRDITGLSAKNQRRLSKAIRRCQAIGLM</sequence>
<proteinExistence type="evidence at protein level"/>
<feature type="transit peptide" description="Mitochondrion" evidence="1">
    <location>
        <begin position="1"/>
        <end position="16"/>
    </location>
</feature>
<feature type="chain" id="PRO_0000111318" description="Small ribosomal subunit protein bS18m">
    <location>
        <begin position="17"/>
        <end position="138"/>
    </location>
</feature>
<feature type="helix" evidence="11">
    <location>
        <begin position="43"/>
        <end position="45"/>
    </location>
</feature>
<feature type="helix" evidence="11">
    <location>
        <begin position="57"/>
        <end position="60"/>
    </location>
</feature>
<feature type="helix" evidence="11">
    <location>
        <begin position="62"/>
        <end position="70"/>
    </location>
</feature>
<feature type="strand" evidence="11">
    <location>
        <begin position="83"/>
        <end position="86"/>
    </location>
</feature>
<feature type="helix" evidence="11">
    <location>
        <begin position="89"/>
        <end position="92"/>
    </location>
</feature>
<feature type="helix" evidence="11">
    <location>
        <begin position="96"/>
        <end position="99"/>
    </location>
</feature>
<feature type="turn" evidence="11">
    <location>
        <begin position="100"/>
        <end position="102"/>
    </location>
</feature>
<feature type="helix" evidence="11">
    <location>
        <begin position="112"/>
        <end position="115"/>
    </location>
</feature>
<feature type="helix" evidence="11">
    <location>
        <begin position="119"/>
        <end position="134"/>
    </location>
</feature>
<dbReference type="EMBL" id="U18796">
    <property type="protein sequence ID" value="AAB64585.1"/>
    <property type="status" value="ALT_INIT"/>
    <property type="molecule type" value="Genomic_DNA"/>
</dbReference>
<dbReference type="EMBL" id="BK006939">
    <property type="protein sequence ID" value="DAA07706.1"/>
    <property type="molecule type" value="Genomic_DNA"/>
</dbReference>
<dbReference type="PIR" id="S50553">
    <property type="entry name" value="S50553"/>
</dbReference>
<dbReference type="RefSeq" id="NP_010970.4">
    <property type="nucleotide sequence ID" value="NM_001178941.3"/>
</dbReference>
<dbReference type="PDB" id="5MRC">
    <property type="method" value="EM"/>
    <property type="resolution" value="3.25 A"/>
    <property type="chains" value="RR=40-138"/>
</dbReference>
<dbReference type="PDB" id="5MRE">
    <property type="method" value="EM"/>
    <property type="resolution" value="3.75 A"/>
    <property type="chains" value="RR=40-138"/>
</dbReference>
<dbReference type="PDB" id="5MRF">
    <property type="method" value="EM"/>
    <property type="resolution" value="4.97 A"/>
    <property type="chains" value="RR=40-138"/>
</dbReference>
<dbReference type="PDB" id="8D8J">
    <property type="method" value="EM"/>
    <property type="resolution" value="3.80 A"/>
    <property type="chains" value="R=1-138"/>
</dbReference>
<dbReference type="PDB" id="8D8K">
    <property type="method" value="EM"/>
    <property type="resolution" value="3.13 A"/>
    <property type="chains" value="R=1-138"/>
</dbReference>
<dbReference type="PDB" id="8D8L">
    <property type="method" value="EM"/>
    <property type="resolution" value="2.60 A"/>
    <property type="chains" value="R=1-138"/>
</dbReference>
<dbReference type="PDB" id="8OM2">
    <property type="method" value="EM"/>
    <property type="resolution" value="2.57 A"/>
    <property type="chains" value="R=1-138"/>
</dbReference>
<dbReference type="PDB" id="8OM3">
    <property type="method" value="EM"/>
    <property type="resolution" value="2.87 A"/>
    <property type="chains" value="R=1-138"/>
</dbReference>
<dbReference type="PDB" id="8OM4">
    <property type="method" value="EM"/>
    <property type="resolution" value="2.32 A"/>
    <property type="chains" value="R=1-138"/>
</dbReference>
<dbReference type="PDBsum" id="5MRC"/>
<dbReference type="PDBsum" id="5MRE"/>
<dbReference type="PDBsum" id="5MRF"/>
<dbReference type="PDBsum" id="8D8J"/>
<dbReference type="PDBsum" id="8D8K"/>
<dbReference type="PDBsum" id="8D8L"/>
<dbReference type="PDBsum" id="8OM2"/>
<dbReference type="PDBsum" id="8OM3"/>
<dbReference type="PDBsum" id="8OM4"/>
<dbReference type="EMDB" id="EMD-16966"/>
<dbReference type="EMDB" id="EMD-16967"/>
<dbReference type="EMDB" id="EMD-16968"/>
<dbReference type="EMDB" id="EMD-27249"/>
<dbReference type="EMDB" id="EMD-27250"/>
<dbReference type="EMDB" id="EMD-27251"/>
<dbReference type="EMDB" id="EMD-3551"/>
<dbReference type="EMDB" id="EMD-3552"/>
<dbReference type="EMDB" id="EMD-3553"/>
<dbReference type="SMR" id="P40033"/>
<dbReference type="BioGRID" id="36789">
    <property type="interactions" value="63"/>
</dbReference>
<dbReference type="ComplexPortal" id="CPX-1603">
    <property type="entry name" value="37S mitochondrial small ribosomal subunit"/>
</dbReference>
<dbReference type="FunCoup" id="P40033">
    <property type="interactions" value="274"/>
</dbReference>
<dbReference type="IntAct" id="P40033">
    <property type="interactions" value="38"/>
</dbReference>
<dbReference type="MINT" id="P40033"/>
<dbReference type="STRING" id="4932.YER050C"/>
<dbReference type="PaxDb" id="4932-YER050C"/>
<dbReference type="PeptideAtlas" id="P40033"/>
<dbReference type="EnsemblFungi" id="YER050C_mRNA">
    <property type="protein sequence ID" value="YER050C"/>
    <property type="gene ID" value="YER050C"/>
</dbReference>
<dbReference type="GeneID" id="856776"/>
<dbReference type="KEGG" id="sce:YER050C"/>
<dbReference type="AGR" id="SGD:S000000852"/>
<dbReference type="SGD" id="S000000852">
    <property type="gene designation" value="RSM18"/>
</dbReference>
<dbReference type="VEuPathDB" id="FungiDB:YER050C"/>
<dbReference type="eggNOG" id="KOG3162">
    <property type="taxonomic scope" value="Eukaryota"/>
</dbReference>
<dbReference type="HOGENOM" id="CLU_082177_2_0_1"/>
<dbReference type="InParanoid" id="P40033"/>
<dbReference type="OMA" id="MFKMNAT"/>
<dbReference type="OrthoDB" id="21463at2759"/>
<dbReference type="BioCyc" id="YEAST:G3O-30229-MONOMER"/>
<dbReference type="BioGRID-ORCS" id="856776">
    <property type="hits" value="1 hit in 10 CRISPR screens"/>
</dbReference>
<dbReference type="PRO" id="PR:P40033"/>
<dbReference type="Proteomes" id="UP000002311">
    <property type="component" value="Chromosome V"/>
</dbReference>
<dbReference type="RNAct" id="P40033">
    <property type="molecule type" value="protein"/>
</dbReference>
<dbReference type="GO" id="GO:0005743">
    <property type="term" value="C:mitochondrial inner membrane"/>
    <property type="evidence" value="ECO:0000303"/>
    <property type="project" value="ComplexPortal"/>
</dbReference>
<dbReference type="GO" id="GO:0005763">
    <property type="term" value="C:mitochondrial small ribosomal subunit"/>
    <property type="evidence" value="ECO:0000314"/>
    <property type="project" value="SGD"/>
</dbReference>
<dbReference type="GO" id="GO:0005739">
    <property type="term" value="C:mitochondrion"/>
    <property type="evidence" value="ECO:0007005"/>
    <property type="project" value="SGD"/>
</dbReference>
<dbReference type="GO" id="GO:0070181">
    <property type="term" value="F:small ribosomal subunit rRNA binding"/>
    <property type="evidence" value="ECO:0000318"/>
    <property type="project" value="GO_Central"/>
</dbReference>
<dbReference type="GO" id="GO:0003735">
    <property type="term" value="F:structural constituent of ribosome"/>
    <property type="evidence" value="ECO:0000314"/>
    <property type="project" value="SGD"/>
</dbReference>
<dbReference type="GO" id="GO:0032543">
    <property type="term" value="P:mitochondrial translation"/>
    <property type="evidence" value="ECO:0000303"/>
    <property type="project" value="ComplexPortal"/>
</dbReference>
<dbReference type="GO" id="GO:0006412">
    <property type="term" value="P:translation"/>
    <property type="evidence" value="ECO:0000318"/>
    <property type="project" value="GO_Central"/>
</dbReference>
<dbReference type="FunFam" id="4.10.640.10:FF:000020">
    <property type="entry name" value="37S ribosomal protein RSM18, mitochondrial"/>
    <property type="match status" value="1"/>
</dbReference>
<dbReference type="Gene3D" id="4.10.640.10">
    <property type="entry name" value="Ribosomal protein S18"/>
    <property type="match status" value="1"/>
</dbReference>
<dbReference type="InterPro" id="IPR001648">
    <property type="entry name" value="Ribosomal_bS18"/>
</dbReference>
<dbReference type="InterPro" id="IPR036870">
    <property type="entry name" value="Ribosomal_bS18_sf"/>
</dbReference>
<dbReference type="PANTHER" id="PTHR13479">
    <property type="entry name" value="30S RIBOSOMAL PROTEIN S18"/>
    <property type="match status" value="1"/>
</dbReference>
<dbReference type="PANTHER" id="PTHR13479:SF40">
    <property type="entry name" value="SMALL RIBOSOMAL SUBUNIT PROTEIN BS18M"/>
    <property type="match status" value="1"/>
</dbReference>
<dbReference type="Pfam" id="PF01084">
    <property type="entry name" value="Ribosomal_S18"/>
    <property type="match status" value="1"/>
</dbReference>
<dbReference type="PRINTS" id="PR00974">
    <property type="entry name" value="RIBOSOMALS18"/>
</dbReference>
<dbReference type="SUPFAM" id="SSF46911">
    <property type="entry name" value="Ribosomal protein S18"/>
    <property type="match status" value="1"/>
</dbReference>
<evidence type="ECO:0000255" key="1"/>
<evidence type="ECO:0000269" key="2">
    <source>
    </source>
</evidence>
<evidence type="ECO:0000269" key="3">
    <source>
    </source>
</evidence>
<evidence type="ECO:0000269" key="4">
    <source>
    </source>
</evidence>
<evidence type="ECO:0000269" key="5">
    <source>
    </source>
</evidence>
<evidence type="ECO:0000269" key="6">
    <source>
    </source>
</evidence>
<evidence type="ECO:0000303" key="7">
    <source>
    </source>
</evidence>
<evidence type="ECO:0000305" key="8"/>
<evidence type="ECO:0000305" key="9">
    <source>
    </source>
</evidence>
<evidence type="ECO:0000305" key="10">
    <source>
    </source>
</evidence>
<evidence type="ECO:0007829" key="11">
    <source>
        <dbReference type="PDB" id="8D8L"/>
    </source>
</evidence>
<gene>
    <name type="primary">RSM18</name>
    <name type="ordered locus">YER050C</name>
</gene>
<protein>
    <recommendedName>
        <fullName evidence="7">Small ribosomal subunit protein bS18m</fullName>
    </recommendedName>
    <alternativeName>
        <fullName>37S ribosomal protein RSM18, mitochondrial</fullName>
    </alternativeName>
</protein>
<organism>
    <name type="scientific">Saccharomyces cerevisiae (strain ATCC 204508 / S288c)</name>
    <name type="common">Baker's yeast</name>
    <dbReference type="NCBI Taxonomy" id="559292"/>
    <lineage>
        <taxon>Eukaryota</taxon>
        <taxon>Fungi</taxon>
        <taxon>Dikarya</taxon>
        <taxon>Ascomycota</taxon>
        <taxon>Saccharomycotina</taxon>
        <taxon>Saccharomycetes</taxon>
        <taxon>Saccharomycetales</taxon>
        <taxon>Saccharomycetaceae</taxon>
        <taxon>Saccharomyces</taxon>
    </lineage>
</organism>
<reference key="1">
    <citation type="journal article" date="1997" name="Nature">
        <title>The nucleotide sequence of Saccharomyces cerevisiae chromosome V.</title>
        <authorList>
            <person name="Dietrich F.S."/>
            <person name="Mulligan J.T."/>
            <person name="Hennessy K.M."/>
            <person name="Yelton M.A."/>
            <person name="Allen E."/>
            <person name="Araujo R."/>
            <person name="Aviles E."/>
            <person name="Berno A."/>
            <person name="Brennan T."/>
            <person name="Carpenter J."/>
            <person name="Chen E."/>
            <person name="Cherry J.M."/>
            <person name="Chung E."/>
            <person name="Duncan M."/>
            <person name="Guzman E."/>
            <person name="Hartzell G."/>
            <person name="Hunicke-Smith S."/>
            <person name="Hyman R.W."/>
            <person name="Kayser A."/>
            <person name="Komp C."/>
            <person name="Lashkari D."/>
            <person name="Lew H."/>
            <person name="Lin D."/>
            <person name="Mosedale D."/>
            <person name="Nakahara K."/>
            <person name="Namath A."/>
            <person name="Norgren R."/>
            <person name="Oefner P."/>
            <person name="Oh C."/>
            <person name="Petel F.X."/>
            <person name="Roberts D."/>
            <person name="Sehl P."/>
            <person name="Schramm S."/>
            <person name="Shogren T."/>
            <person name="Smith V."/>
            <person name="Taylor P."/>
            <person name="Wei Y."/>
            <person name="Botstein D."/>
            <person name="Davis R.W."/>
        </authorList>
    </citation>
    <scope>NUCLEOTIDE SEQUENCE [LARGE SCALE GENOMIC DNA]</scope>
    <source>
        <strain>ATCC 204508 / S288c</strain>
    </source>
</reference>
<reference key="2">
    <citation type="journal article" date="2014" name="G3 (Bethesda)">
        <title>The reference genome sequence of Saccharomyces cerevisiae: Then and now.</title>
        <authorList>
            <person name="Engel S.R."/>
            <person name="Dietrich F.S."/>
            <person name="Fisk D.G."/>
            <person name="Binkley G."/>
            <person name="Balakrishnan R."/>
            <person name="Costanzo M.C."/>
            <person name="Dwight S.S."/>
            <person name="Hitz B.C."/>
            <person name="Karra K."/>
            <person name="Nash R.S."/>
            <person name="Weng S."/>
            <person name="Wong E.D."/>
            <person name="Lloyd P."/>
            <person name="Skrzypek M.S."/>
            <person name="Miyasato S.R."/>
            <person name="Simison M."/>
            <person name="Cherry J.M."/>
        </authorList>
    </citation>
    <scope>GENOME REANNOTATION</scope>
    <source>
        <strain>ATCC 204508 / S288c</strain>
    </source>
</reference>
<reference key="3">
    <citation type="journal article" date="2001" name="J. Biol. Chem.">
        <title>Identification of 12 new yeast mitochondrial ribosomal proteins including 6 that have no prokaryotic homologues.</title>
        <authorList>
            <person name="Saveanu C."/>
            <person name="Fromont-Racine M."/>
            <person name="Harington A."/>
            <person name="Ricard F."/>
            <person name="Namane A."/>
            <person name="Jacquier A."/>
        </authorList>
    </citation>
    <scope>IDENTIFICATION IN THE MITOCHONDRIAL RIBOSOMAL SMALL COMPLEX</scope>
    <scope>IDENTIFICATION BY MASS SPECTROMETRY</scope>
</reference>
<reference key="4">
    <citation type="journal article" date="2003" name="Nature">
        <title>Global analysis of protein expression in yeast.</title>
        <authorList>
            <person name="Ghaemmaghami S."/>
            <person name="Huh W.-K."/>
            <person name="Bower K."/>
            <person name="Howson R.W."/>
            <person name="Belle A."/>
            <person name="Dephoure N."/>
            <person name="O'Shea E.K."/>
            <person name="Weissman J.S."/>
        </authorList>
    </citation>
    <scope>LEVEL OF PROTEIN EXPRESSION [LARGE SCALE ANALYSIS]</scope>
</reference>
<reference key="5">
    <citation type="journal article" date="2003" name="Proc. Natl. Acad. Sci. U.S.A.">
        <title>The proteome of Saccharomyces cerevisiae mitochondria.</title>
        <authorList>
            <person name="Sickmann A."/>
            <person name="Reinders J."/>
            <person name="Wagner Y."/>
            <person name="Joppich C."/>
            <person name="Zahedi R.P."/>
            <person name="Meyer H.E."/>
            <person name="Schoenfisch B."/>
            <person name="Perschil I."/>
            <person name="Chacinska A."/>
            <person name="Guiard B."/>
            <person name="Rehling P."/>
            <person name="Pfanner N."/>
            <person name="Meisinger C."/>
        </authorList>
    </citation>
    <scope>SUBCELLULAR LOCATION [LARGE SCALE ANALYSIS]</scope>
    <source>
        <strain>ATCC 76625 / YPH499</strain>
    </source>
</reference>
<reference key="6">
    <citation type="journal article" date="2005" name="Nucleic Acids Res.">
        <title>Mapping of transcription start sites in Saccharomyces cerevisiae using 5' SAGE.</title>
        <authorList>
            <person name="Zhang Z."/>
            <person name="Dietrich F.S."/>
        </authorList>
    </citation>
    <scope>IDENTIFICATION OF PROBABLE INITIATION SITE</scope>
</reference>
<reference key="7">
    <citation type="journal article" date="2015" name="Nat. Commun.">
        <title>Organization of the mitochondrial translation machinery studied in situ by cryoelectron tomography.</title>
        <authorList>
            <person name="Pfeffer S."/>
            <person name="Woellhaf M.W."/>
            <person name="Herrmann J.M."/>
            <person name="Forster F."/>
        </authorList>
    </citation>
    <scope>SUBCELLULAR LOCATION</scope>
</reference>
<reference key="8">
    <citation type="journal article" date="2017" name="Science">
        <title>The structure of the yeast mitochondrial ribosome.</title>
        <authorList>
            <person name="Desai N."/>
            <person name="Brown A."/>
            <person name="Amunts A."/>
            <person name="Ramakrishnan V."/>
        </authorList>
    </citation>
    <scope>STRUCTURE BY ELECTRON MICROSCOPY (3.25 ANGSTROMS)</scope>
    <scope>SUBUNIT</scope>
</reference>
<keyword id="KW-0002">3D-structure</keyword>
<keyword id="KW-0496">Mitochondrion</keyword>
<keyword id="KW-1185">Reference proteome</keyword>
<keyword id="KW-0687">Ribonucleoprotein</keyword>
<keyword id="KW-0689">Ribosomal protein</keyword>
<keyword id="KW-0809">Transit peptide</keyword>
<accession>P40033</accession>
<accession>D3DLV2</accession>
<name>RSM18_YEAST</name>